<sequence>MGFLRRQLREQFEKKKPEALQADIRMISGCQDVQTSADVSNVSSFQLPDPAGNAGGACTSTLLNVLYKDHQTPEDTMSFVELLNKMRENLEAKGFSQVPQLTASHPIDVNDDFDLVPPAATGTRRALLIGINYVGHEQGVLRGCHNDVKNMVEYIKAVHGFEDENITILMDDGEHTAPTHANMIAAYKKIVALSKADDALFCHFSGHGAKIRDDDRGEEDDGYDETLVPIDYHENGMIRDDDLYDILIKPLVQGVHLVCLMDCCHSGTVLDLPYVYKADGNFTEMEIDENFDFKKLLGKFGIDDFDKFGGEALGKINGDALGKVGKDALGKLNKFFG</sequence>
<name>MCA3C_PHATC</name>
<protein>
    <recommendedName>
        <fullName evidence="4">Metacaspase III c</fullName>
        <shortName evidence="4">PtMCA-IIIc</shortName>
        <ecNumber evidence="3">3.4.22.-</ecNumber>
    </recommendedName>
    <component>
        <recommendedName>
            <fullName evidence="6">Small subunit p10</fullName>
        </recommendedName>
    </component>
    <component>
        <recommendedName>
            <fullName evidence="6">Large subunit p20</fullName>
        </recommendedName>
    </component>
</protein>
<evidence type="ECO:0000250" key="1">
    <source>
        <dbReference type="UniProtKB" id="Q08601"/>
    </source>
</evidence>
<evidence type="ECO:0000250" key="2">
    <source>
        <dbReference type="UniProtKB" id="Q585F3"/>
    </source>
</evidence>
<evidence type="ECO:0000269" key="3">
    <source>
    </source>
</evidence>
<evidence type="ECO:0000303" key="4">
    <source>
    </source>
</evidence>
<evidence type="ECO:0000305" key="5"/>
<evidence type="ECO:0000305" key="6">
    <source>
    </source>
</evidence>
<evidence type="ECO:0000312" key="7">
    <source>
        <dbReference type="EMBL" id="EEC45993.1"/>
    </source>
</evidence>
<evidence type="ECO:0000312" key="8">
    <source>
        <dbReference type="Proteomes" id="UP000000759"/>
    </source>
</evidence>
<gene>
    <name evidence="4" type="primary">MCA-IIIc</name>
    <name evidence="7" type="ORF">PHATRDRAFT_54873</name>
</gene>
<dbReference type="EC" id="3.4.22.-" evidence="3"/>
<dbReference type="EMBL" id="CM000618">
    <property type="protein sequence ID" value="EEC45993.1"/>
    <property type="molecule type" value="Genomic_DNA"/>
</dbReference>
<dbReference type="RefSeq" id="XP_002182706.1">
    <property type="nucleotide sequence ID" value="XM_002182670.1"/>
</dbReference>
<dbReference type="SMR" id="B7G6D3"/>
<dbReference type="STRING" id="556484.B7G6D3"/>
<dbReference type="PaxDb" id="2850-Phatr54873"/>
<dbReference type="GeneID" id="7203528"/>
<dbReference type="KEGG" id="pti:PHATRDRAFT_54873"/>
<dbReference type="eggNOG" id="KOG1546">
    <property type="taxonomic scope" value="Eukaryota"/>
</dbReference>
<dbReference type="HOGENOM" id="CLU_058143_0_0_1"/>
<dbReference type="InParanoid" id="B7G6D3"/>
<dbReference type="OMA" id="PTHANMI"/>
<dbReference type="OrthoDB" id="3223806at2759"/>
<dbReference type="Proteomes" id="UP000000759">
    <property type="component" value="Chromosome 16"/>
</dbReference>
<dbReference type="GO" id="GO:0005737">
    <property type="term" value="C:cytoplasm"/>
    <property type="evidence" value="ECO:0007669"/>
    <property type="project" value="TreeGrafter"/>
</dbReference>
<dbReference type="GO" id="GO:0004197">
    <property type="term" value="F:cysteine-type endopeptidase activity"/>
    <property type="evidence" value="ECO:0007669"/>
    <property type="project" value="InterPro"/>
</dbReference>
<dbReference type="GO" id="GO:0046872">
    <property type="term" value="F:metal ion binding"/>
    <property type="evidence" value="ECO:0007669"/>
    <property type="project" value="UniProtKB-KW"/>
</dbReference>
<dbReference type="GO" id="GO:0006508">
    <property type="term" value="P:proteolysis"/>
    <property type="evidence" value="ECO:0007669"/>
    <property type="project" value="UniProtKB-KW"/>
</dbReference>
<dbReference type="Gene3D" id="3.40.50.12660">
    <property type="match status" value="2"/>
</dbReference>
<dbReference type="InterPro" id="IPR029030">
    <property type="entry name" value="Caspase-like_dom_sf"/>
</dbReference>
<dbReference type="InterPro" id="IPR050452">
    <property type="entry name" value="Metacaspase"/>
</dbReference>
<dbReference type="InterPro" id="IPR011600">
    <property type="entry name" value="Pept_C14_caspase"/>
</dbReference>
<dbReference type="PANTHER" id="PTHR48104:SF30">
    <property type="entry name" value="METACASPASE-1"/>
    <property type="match status" value="1"/>
</dbReference>
<dbReference type="PANTHER" id="PTHR48104">
    <property type="entry name" value="METACASPASE-4"/>
    <property type="match status" value="1"/>
</dbReference>
<dbReference type="Pfam" id="PF00656">
    <property type="entry name" value="Peptidase_C14"/>
    <property type="match status" value="2"/>
</dbReference>
<dbReference type="SUPFAM" id="SSF52129">
    <property type="entry name" value="Caspase-like"/>
    <property type="match status" value="1"/>
</dbReference>
<proteinExistence type="evidence at protein level"/>
<feature type="chain" id="PRO_0000454698" description="Metacaspase III c">
    <location>
        <begin position="1"/>
        <end position="337"/>
    </location>
</feature>
<feature type="propeptide" id="PRO_0000454699" evidence="5">
    <location>
        <begin position="1"/>
        <end position="6"/>
    </location>
</feature>
<feature type="chain" id="PRO_0000454700" description="Small subunit p10" evidence="6">
    <location>
        <begin position="7"/>
        <end position="115"/>
    </location>
</feature>
<feature type="propeptide" id="PRO_0000454701" evidence="5">
    <location>
        <begin position="116"/>
        <end position="125"/>
    </location>
</feature>
<feature type="chain" id="PRO_0000454702" description="Large subunit p20" evidence="6">
    <location>
        <begin position="126"/>
        <end position="289"/>
    </location>
</feature>
<feature type="propeptide" id="PRO_0000454703" evidence="5">
    <location>
        <begin position="290"/>
        <end position="337"/>
    </location>
</feature>
<feature type="active site" evidence="1">
    <location>
        <position position="207"/>
    </location>
</feature>
<feature type="active site" evidence="2">
    <location>
        <position position="264"/>
    </location>
</feature>
<feature type="binding site" evidence="2">
    <location>
        <position position="224"/>
    </location>
    <ligand>
        <name>Ca(2+)</name>
        <dbReference type="ChEBI" id="CHEBI:29108"/>
    </ligand>
</feature>
<feature type="binding site" evidence="2">
    <location>
        <position position="240"/>
    </location>
    <ligand>
        <name>Ca(2+)</name>
        <dbReference type="ChEBI" id="CHEBI:29108"/>
    </ligand>
</feature>
<feature type="binding site" evidence="2">
    <location>
        <position position="241"/>
    </location>
    <ligand>
        <name>Ca(2+)</name>
        <dbReference type="ChEBI" id="CHEBI:29108"/>
    </ligand>
</feature>
<feature type="binding site" evidence="2">
    <location>
        <position position="271"/>
    </location>
    <ligand>
        <name>Ca(2+)</name>
        <dbReference type="ChEBI" id="CHEBI:29108"/>
    </ligand>
</feature>
<feature type="modified residue" description="Cysteine sulfenic acid (-SOH)" evidence="3">
    <location>
        <position position="202"/>
    </location>
</feature>
<feature type="disulfide bond" evidence="6">
    <location>
        <begin position="202"/>
        <end position="259"/>
    </location>
</feature>
<feature type="mutagenesis site" description="Severe reduction in catalytic activity." evidence="3">
    <original>C</original>
    <variation>S</variation>
    <location>
        <position position="202"/>
    </location>
</feature>
<feature type="mutagenesis site" description="Severe reduction in catalytic activity." evidence="3">
    <original>C</original>
    <variation>S</variation>
    <location>
        <position position="259"/>
    </location>
</feature>
<feature type="mutagenesis site" description="Loss of catalytic activity." evidence="3">
    <original>C</original>
    <variation>S</variation>
    <location>
        <position position="264"/>
    </location>
</feature>
<keyword id="KW-0068">Autocatalytic cleavage</keyword>
<keyword id="KW-0106">Calcium</keyword>
<keyword id="KW-1015">Disulfide bond</keyword>
<keyword id="KW-0378">Hydrolase</keyword>
<keyword id="KW-0479">Metal-binding</keyword>
<keyword id="KW-0558">Oxidation</keyword>
<keyword id="KW-0645">Protease</keyword>
<keyword id="KW-1185">Reference proteome</keyword>
<keyword id="KW-0788">Thiol protease</keyword>
<keyword id="KW-0865">Zymogen</keyword>
<accession>B7G6D3</accession>
<comment type="function">
    <text evidence="3">Cysteine protease that cleaves specifically after arginine residues.</text>
</comment>
<comment type="activity regulation">
    <text evidence="3">Activated by Ca(2+).</text>
</comment>
<comment type="PTM">
    <text evidence="3">Auto-proteolytic cleavage into a large and a small subunit which probably remain associated by non-covalent bonds.</text>
</comment>
<comment type="PTM">
    <text evidence="3">Following oxidative stress, the oxidation of Cys-202 leads to the formation of a disulfide bond between Cys-202 and Cys-259 which enhances catalytic activity.</text>
</comment>
<comment type="similarity">
    <text evidence="5">Belongs to the peptidase C14B family.</text>
</comment>
<organism evidence="8">
    <name type="scientific">Phaeodactylum tricornutum (strain CCAP 1055/1)</name>
    <dbReference type="NCBI Taxonomy" id="556484"/>
    <lineage>
        <taxon>Eukaryota</taxon>
        <taxon>Sar</taxon>
        <taxon>Stramenopiles</taxon>
        <taxon>Ochrophyta</taxon>
        <taxon>Bacillariophyta</taxon>
        <taxon>Bacillariophyceae</taxon>
        <taxon>Bacillariophycidae</taxon>
        <taxon>Naviculales</taxon>
        <taxon>Phaeodactylaceae</taxon>
        <taxon>Phaeodactylum</taxon>
    </lineage>
</organism>
<reference evidence="8" key="1">
    <citation type="journal article" date="2008" name="Nature">
        <title>The Phaeodactylum genome reveals the evolutionary history of diatom genomes.</title>
        <authorList>
            <person name="Bowler C."/>
            <person name="Allen A.E."/>
            <person name="Badger J.H."/>
            <person name="Grimwood J."/>
            <person name="Jabbari K."/>
            <person name="Kuo A."/>
            <person name="Maheswari U."/>
            <person name="Martens C."/>
            <person name="Maumus F."/>
            <person name="Otillar R.P."/>
            <person name="Rayko E."/>
            <person name="Salamov A."/>
            <person name="Vandepoele K."/>
            <person name="Beszteri B."/>
            <person name="Gruber A."/>
            <person name="Heijde M."/>
            <person name="Katinka M."/>
            <person name="Mock T."/>
            <person name="Valentin K."/>
            <person name="Verret F."/>
            <person name="Berges J.A."/>
            <person name="Brownlee C."/>
            <person name="Cadoret J.P."/>
            <person name="Chiovitti A."/>
            <person name="Choi C.J."/>
            <person name="Coesel S."/>
            <person name="De Martino A."/>
            <person name="Detter J.C."/>
            <person name="Durkin C."/>
            <person name="Falciatore A."/>
            <person name="Fournet J."/>
            <person name="Haruta M."/>
            <person name="Huysman M.J."/>
            <person name="Jenkins B.D."/>
            <person name="Jiroutova K."/>
            <person name="Jorgensen R.E."/>
            <person name="Joubert Y."/>
            <person name="Kaplan A."/>
            <person name="Kroger N."/>
            <person name="Kroth P.G."/>
            <person name="La Roche J."/>
            <person name="Lindquist E."/>
            <person name="Lommer M."/>
            <person name="Martin-Jezequel V."/>
            <person name="Lopez P.J."/>
            <person name="Lucas S."/>
            <person name="Mangogna M."/>
            <person name="McGinnis K."/>
            <person name="Medlin L.K."/>
            <person name="Montsant A."/>
            <person name="Oudot-Le Secq M.P."/>
            <person name="Napoli C."/>
            <person name="Obornik M."/>
            <person name="Parker M.S."/>
            <person name="Petit J.L."/>
            <person name="Porcel B.M."/>
            <person name="Poulsen N."/>
            <person name="Robison M."/>
            <person name="Rychlewski L."/>
            <person name="Rynearson T.A."/>
            <person name="Schmutz J."/>
            <person name="Shapiro H."/>
            <person name="Siaut M."/>
            <person name="Stanley M."/>
            <person name="Sussman M.R."/>
            <person name="Taylor A.R."/>
            <person name="Vardi A."/>
            <person name="von Dassow P."/>
            <person name="Vyverman W."/>
            <person name="Willis A."/>
            <person name="Wyrwicz L.S."/>
            <person name="Rokhsar D.S."/>
            <person name="Weissenbach J."/>
            <person name="Armbrust E.V."/>
            <person name="Green B.R."/>
            <person name="Van de Peer Y."/>
            <person name="Grigoriev I.V."/>
        </authorList>
    </citation>
    <scope>NUCLEOTIDE SEQUENCE [LARGE SCALE GENOMIC DNA]</scope>
    <source>
        <strain evidence="8">CCAP 1055/1</strain>
    </source>
</reference>
<reference evidence="8" key="2">
    <citation type="submission" date="2008-08" db="EMBL/GenBank/DDBJ databases">
        <authorList>
            <consortium name="Diatom Consortium"/>
            <person name="Grigoriev I."/>
            <person name="Grimwood J."/>
            <person name="Kuo A."/>
            <person name="Otillar R.P."/>
            <person name="Salamov A."/>
            <person name="Detter J.C."/>
            <person name="Lindquist E."/>
            <person name="Shapiro H."/>
            <person name="Lucas S."/>
            <person name="Glavina del Rio T."/>
            <person name="Pitluck S."/>
            <person name="Rokhsar D."/>
            <person name="Bowler C."/>
        </authorList>
    </citation>
    <scope>GENOME REANNOTATION</scope>
    <source>
        <strain evidence="8">CCAP 1055/1</strain>
    </source>
</reference>
<reference evidence="5" key="3">
    <citation type="journal article" date="2021" name="Front. Microbiol.">
        <title>Biochemical Characterization of a Novel Redox-Regulated Metacaspase in a Marine Diatom.</title>
        <authorList>
            <person name="Graff van Creveld S."/>
            <person name="Ben-Dor S."/>
            <person name="Mizrachi A."/>
            <person name="Alcolombri U."/>
            <person name="Hopes A."/>
            <person name="Mock T."/>
            <person name="Rosenwasser S."/>
            <person name="Vardi A."/>
        </authorList>
    </citation>
    <scope>FUNCTION</scope>
    <scope>CATALYTIC ACTIVITY</scope>
    <scope>ACTIVITY REGULATION</scope>
    <scope>PROTEOLYTIC CLEAVAGE</scope>
    <scope>DISULFIDE BOND</scope>
    <scope>OXIDATION AT CYS-202</scope>
    <scope>MUTAGENESIS OF CYS-202; CYS-259 AND CYS-264</scope>
    <scope>CORRECTION OF N-TERMINUS</scope>
</reference>